<comment type="function">
    <text evidence="1">Forms part of the ribosomal stalk which helps the ribosome interact with GTP-bound translation factors. Is thus essential for accurate translation.</text>
</comment>
<comment type="subunit">
    <text evidence="1">Homodimer. Part of the ribosomal stalk of the 50S ribosomal subunit. Forms a multimeric L10(L12)X complex, where L10 forms an elongated spine to which 2 to 4 L12 dimers bind in a sequential fashion. Binds GTP-bound translation factors.</text>
</comment>
<comment type="similarity">
    <text evidence="1">Belongs to the bacterial ribosomal protein bL12 family.</text>
</comment>
<evidence type="ECO:0000255" key="1">
    <source>
        <dbReference type="HAMAP-Rule" id="MF_00368"/>
    </source>
</evidence>
<evidence type="ECO:0000305" key="2"/>
<proteinExistence type="inferred from homology"/>
<organism>
    <name type="scientific">Ureaplasma urealyticum serovar 10 (strain ATCC 33699 / Western)</name>
    <dbReference type="NCBI Taxonomy" id="565575"/>
    <lineage>
        <taxon>Bacteria</taxon>
        <taxon>Bacillati</taxon>
        <taxon>Mycoplasmatota</taxon>
        <taxon>Mycoplasmoidales</taxon>
        <taxon>Mycoplasmoidaceae</taxon>
        <taxon>Ureaplasma</taxon>
    </lineage>
</organism>
<sequence>MSKLTIEQFIAAIKEMSMLELNDLVKAIETEFGVSAAAPVAVAAAPAAAEAPTEVTIKLVEAGANKVGVIKLIREITGLGLMEAKTAAETAGSVIKEDVKTEEANEIKKKFDELGAKVQLV</sequence>
<gene>
    <name evidence="1" type="primary">rplL</name>
    <name type="ordered locus">UUR10_0011</name>
</gene>
<name>RL7_UREU1</name>
<protein>
    <recommendedName>
        <fullName evidence="1">Large ribosomal subunit protein bL12</fullName>
    </recommendedName>
    <alternativeName>
        <fullName evidence="2">50S ribosomal protein L7/L12</fullName>
    </alternativeName>
</protein>
<keyword id="KW-0687">Ribonucleoprotein</keyword>
<keyword id="KW-0689">Ribosomal protein</keyword>
<feature type="chain" id="PRO_1000121504" description="Large ribosomal subunit protein bL12">
    <location>
        <begin position="1"/>
        <end position="121"/>
    </location>
</feature>
<dbReference type="EMBL" id="CP001184">
    <property type="protein sequence ID" value="ACI60062.1"/>
    <property type="molecule type" value="Genomic_DNA"/>
</dbReference>
<dbReference type="RefSeq" id="WP_004025906.1">
    <property type="nucleotide sequence ID" value="NC_011374.1"/>
</dbReference>
<dbReference type="SMR" id="B5ZAI4"/>
<dbReference type="STRING" id="565575.UUR10_0011"/>
<dbReference type="GeneID" id="93848503"/>
<dbReference type="KEGG" id="uue:UUR10_0011"/>
<dbReference type="eggNOG" id="COG0222">
    <property type="taxonomic scope" value="Bacteria"/>
</dbReference>
<dbReference type="HOGENOM" id="CLU_086499_3_2_14"/>
<dbReference type="OrthoDB" id="9811748at2"/>
<dbReference type="Proteomes" id="UP000002018">
    <property type="component" value="Chromosome"/>
</dbReference>
<dbReference type="GO" id="GO:0022625">
    <property type="term" value="C:cytosolic large ribosomal subunit"/>
    <property type="evidence" value="ECO:0007669"/>
    <property type="project" value="TreeGrafter"/>
</dbReference>
<dbReference type="GO" id="GO:0003729">
    <property type="term" value="F:mRNA binding"/>
    <property type="evidence" value="ECO:0007669"/>
    <property type="project" value="TreeGrafter"/>
</dbReference>
<dbReference type="GO" id="GO:0003735">
    <property type="term" value="F:structural constituent of ribosome"/>
    <property type="evidence" value="ECO:0007669"/>
    <property type="project" value="InterPro"/>
</dbReference>
<dbReference type="GO" id="GO:0006412">
    <property type="term" value="P:translation"/>
    <property type="evidence" value="ECO:0007669"/>
    <property type="project" value="UniProtKB-UniRule"/>
</dbReference>
<dbReference type="CDD" id="cd00387">
    <property type="entry name" value="Ribosomal_L7_L12"/>
    <property type="match status" value="1"/>
</dbReference>
<dbReference type="FunFam" id="3.30.1390.10:FF:000001">
    <property type="entry name" value="50S ribosomal protein L7/L12"/>
    <property type="match status" value="1"/>
</dbReference>
<dbReference type="Gene3D" id="3.30.1390.10">
    <property type="match status" value="1"/>
</dbReference>
<dbReference type="Gene3D" id="1.20.5.710">
    <property type="entry name" value="Single helix bin"/>
    <property type="match status" value="1"/>
</dbReference>
<dbReference type="HAMAP" id="MF_00368">
    <property type="entry name" value="Ribosomal_bL12"/>
    <property type="match status" value="1"/>
</dbReference>
<dbReference type="InterPro" id="IPR000206">
    <property type="entry name" value="Ribosomal_bL12"/>
</dbReference>
<dbReference type="InterPro" id="IPR013823">
    <property type="entry name" value="Ribosomal_bL12_C"/>
</dbReference>
<dbReference type="InterPro" id="IPR014719">
    <property type="entry name" value="Ribosomal_bL12_C/ClpS-like"/>
</dbReference>
<dbReference type="InterPro" id="IPR008932">
    <property type="entry name" value="Ribosomal_bL12_oligo"/>
</dbReference>
<dbReference type="InterPro" id="IPR036235">
    <property type="entry name" value="Ribosomal_bL12_oligo_N_sf"/>
</dbReference>
<dbReference type="NCBIfam" id="TIGR00855">
    <property type="entry name" value="L12"/>
    <property type="match status" value="1"/>
</dbReference>
<dbReference type="PANTHER" id="PTHR45987">
    <property type="entry name" value="39S RIBOSOMAL PROTEIN L12"/>
    <property type="match status" value="1"/>
</dbReference>
<dbReference type="PANTHER" id="PTHR45987:SF4">
    <property type="entry name" value="LARGE RIBOSOMAL SUBUNIT PROTEIN BL12M"/>
    <property type="match status" value="1"/>
</dbReference>
<dbReference type="Pfam" id="PF00542">
    <property type="entry name" value="Ribosomal_L12"/>
    <property type="match status" value="1"/>
</dbReference>
<dbReference type="Pfam" id="PF16320">
    <property type="entry name" value="Ribosomal_L12_N"/>
    <property type="match status" value="1"/>
</dbReference>
<dbReference type="SUPFAM" id="SSF54736">
    <property type="entry name" value="ClpS-like"/>
    <property type="match status" value="1"/>
</dbReference>
<dbReference type="SUPFAM" id="SSF48300">
    <property type="entry name" value="Ribosomal protein L7/12, oligomerisation (N-terminal) domain"/>
    <property type="match status" value="1"/>
</dbReference>
<accession>B5ZAI4</accession>
<reference key="1">
    <citation type="submission" date="2008-10" db="EMBL/GenBank/DDBJ databases">
        <title>Genome sequence of Ureaplasma urealyticum serovar 10 ATCC-33699.</title>
        <authorList>
            <person name="Shrivastava S."/>
            <person name="Methe B.A."/>
            <person name="Glass J."/>
            <person name="White K."/>
            <person name="Duffy L.B."/>
        </authorList>
    </citation>
    <scope>NUCLEOTIDE SEQUENCE [LARGE SCALE GENOMIC DNA]</scope>
    <source>
        <strain>ATCC 33699 / Western</strain>
    </source>
</reference>